<comment type="function">
    <text>Stimulates sperm respiration and motility.</text>
</comment>
<proteinExistence type="evidence at protein level"/>
<name>MOSH_CLYJA</name>
<protein>
    <recommendedName>
        <fullName>Sperm-activating peptide SAP-b</fullName>
    </recommendedName>
    <alternativeName>
        <fullName>[His6]-mosact</fullName>
    </alternativeName>
</protein>
<keyword id="KW-0102">Bromination</keyword>
<keyword id="KW-0903">Direct protein sequencing</keyword>
<accession>P19852</accession>
<organism>
    <name type="scientific">Clypeaster japonicus</name>
    <name type="common">Sand dollar</name>
    <dbReference type="NCBI Taxonomy" id="7644"/>
    <lineage>
        <taxon>Eukaryota</taxon>
        <taxon>Metazoa</taxon>
        <taxon>Echinodermata</taxon>
        <taxon>Eleutherozoa</taxon>
        <taxon>Echinozoa</taxon>
        <taxon>Echinoidea</taxon>
        <taxon>Euechinoidea</taxon>
        <taxon>Gnathostomata</taxon>
        <taxon>Clypeasteroida</taxon>
        <taxon>Clypeasteridae</taxon>
        <taxon>Clypeaster</taxon>
    </lineage>
</organism>
<reference key="1">
    <citation type="journal article" date="1987" name="Zool. Sci.">
        <title>Purification and structure of mosact and its derivatives from the egg jelly of the sea urchin Clypeaster japonicus.</title>
        <authorList>
            <person name="Suzuki N."/>
            <person name="Kurita M."/>
            <person name="Yoshino K.I."/>
            <person name="Kajiura H."/>
            <person name="Nomura K."/>
            <person name="Yamaguchi M."/>
        </authorList>
    </citation>
    <scope>PROTEIN SEQUENCE</scope>
    <source>
        <tissue>Egg jelly</tissue>
    </source>
</reference>
<reference key="2">
    <citation type="journal article" date="1990" name="Biomed. Environ. Mass Spectrom.">
        <title>Analysis of post-translational modifications of proteins by accurate mass measurement in fast atom bombardment mass spectrometry.</title>
        <authorList>
            <person name="Takao T."/>
            <person name="Yoshino K."/>
            <person name="Suzuki N."/>
            <person name="Shimonishi Y."/>
        </authorList>
    </citation>
    <scope>BROMINATION AT HIS-6</scope>
</reference>
<dbReference type="PIR" id="JN0026">
    <property type="entry name" value="JN0026"/>
</dbReference>
<sequence>DSDSAHLIG</sequence>
<evidence type="ECO:0000269" key="1">
    <source>
    </source>
</evidence>
<feature type="peptide" id="PRO_0000044171" description="Sperm-activating peptide SAP-b">
    <location>
        <begin position="1"/>
        <end position="9"/>
    </location>
</feature>
<feature type="modified residue" description="Bromohistidine" evidence="1">
    <location>
        <position position="6"/>
    </location>
</feature>